<reference key="1">
    <citation type="submission" date="2006-04" db="EMBL/GenBank/DDBJ databases">
        <title>Complete sequence of chromosome of Deinococcus geothermalis DSM 11300.</title>
        <authorList>
            <person name="Copeland A."/>
            <person name="Lucas S."/>
            <person name="Lapidus A."/>
            <person name="Barry K."/>
            <person name="Detter J.C."/>
            <person name="Glavina del Rio T."/>
            <person name="Hammon N."/>
            <person name="Israni S."/>
            <person name="Dalin E."/>
            <person name="Tice H."/>
            <person name="Pitluck S."/>
            <person name="Brettin T."/>
            <person name="Bruce D."/>
            <person name="Han C."/>
            <person name="Tapia R."/>
            <person name="Saunders E."/>
            <person name="Gilna P."/>
            <person name="Schmutz J."/>
            <person name="Larimer F."/>
            <person name="Land M."/>
            <person name="Hauser L."/>
            <person name="Kyrpides N."/>
            <person name="Kim E."/>
            <person name="Daly M.J."/>
            <person name="Fredrickson J.K."/>
            <person name="Makarova K.S."/>
            <person name="Gaidamakova E.K."/>
            <person name="Zhai M."/>
            <person name="Richardson P."/>
        </authorList>
    </citation>
    <scope>NUCLEOTIDE SEQUENCE [LARGE SCALE GENOMIC DNA]</scope>
    <source>
        <strain>DSM 11300 / CIP 105573 / AG-3a</strain>
    </source>
</reference>
<keyword id="KW-0963">Cytoplasm</keyword>
<keyword id="KW-0328">Glycosyltransferase</keyword>
<keyword id="KW-0660">Purine salvage</keyword>
<keyword id="KW-0808">Transferase</keyword>
<gene>
    <name evidence="1" type="primary">xpt</name>
    <name type="ordered locus">Dgeo_0491</name>
</gene>
<organism>
    <name type="scientific">Deinococcus geothermalis (strain DSM 11300 / CIP 105573 / AG-3a)</name>
    <dbReference type="NCBI Taxonomy" id="319795"/>
    <lineage>
        <taxon>Bacteria</taxon>
        <taxon>Thermotogati</taxon>
        <taxon>Deinococcota</taxon>
        <taxon>Deinococci</taxon>
        <taxon>Deinococcales</taxon>
        <taxon>Deinococcaceae</taxon>
        <taxon>Deinococcus</taxon>
    </lineage>
</organism>
<protein>
    <recommendedName>
        <fullName evidence="1">Xanthine phosphoribosyltransferase</fullName>
        <shortName evidence="1">XPRTase</shortName>
        <ecNumber evidence="1">2.4.2.22</ecNumber>
    </recommendedName>
</protein>
<sequence length="202" mass="21254">MQALVEAIRERGMILPGGMLKVDGLINHQLLPQLTREMGERFAAGFAPLNPNKVVTIEVSGIAPALATALALNVPLVYARKKKPITMQEPTFTAQSISRTKGGAVDLFVSSEYLGSGDRVVVIDDFLASGGTLRALAGIIALSGAELLGLGCVIEKGFEEGRAKLADLGVPILTLANILRMNEQEGIVVEAGLQDLPKQPAG</sequence>
<evidence type="ECO:0000255" key="1">
    <source>
        <dbReference type="HAMAP-Rule" id="MF_01184"/>
    </source>
</evidence>
<dbReference type="EC" id="2.4.2.22" evidence="1"/>
<dbReference type="EMBL" id="CP000359">
    <property type="protein sequence ID" value="ABF44793.1"/>
    <property type="molecule type" value="Genomic_DNA"/>
</dbReference>
<dbReference type="RefSeq" id="WP_011529635.1">
    <property type="nucleotide sequence ID" value="NC_008025.1"/>
</dbReference>
<dbReference type="SMR" id="Q1J141"/>
<dbReference type="STRING" id="319795.Dgeo_0491"/>
<dbReference type="KEGG" id="dge:Dgeo_0491"/>
<dbReference type="eggNOG" id="COG0503">
    <property type="taxonomic scope" value="Bacteria"/>
</dbReference>
<dbReference type="HOGENOM" id="CLU_099015_0_0_0"/>
<dbReference type="UniPathway" id="UPA00602">
    <property type="reaction ID" value="UER00658"/>
</dbReference>
<dbReference type="Proteomes" id="UP000002431">
    <property type="component" value="Chromosome"/>
</dbReference>
<dbReference type="GO" id="GO:0005737">
    <property type="term" value="C:cytoplasm"/>
    <property type="evidence" value="ECO:0007669"/>
    <property type="project" value="UniProtKB-SubCell"/>
</dbReference>
<dbReference type="GO" id="GO:0000310">
    <property type="term" value="F:xanthine phosphoribosyltransferase activity"/>
    <property type="evidence" value="ECO:0007669"/>
    <property type="project" value="UniProtKB-UniRule"/>
</dbReference>
<dbReference type="GO" id="GO:0006166">
    <property type="term" value="P:purine ribonucleoside salvage"/>
    <property type="evidence" value="ECO:0007669"/>
    <property type="project" value="UniProtKB-KW"/>
</dbReference>
<dbReference type="GO" id="GO:0046110">
    <property type="term" value="P:xanthine metabolic process"/>
    <property type="evidence" value="ECO:0007669"/>
    <property type="project" value="InterPro"/>
</dbReference>
<dbReference type="GO" id="GO:0032265">
    <property type="term" value="P:XMP salvage"/>
    <property type="evidence" value="ECO:0007669"/>
    <property type="project" value="UniProtKB-UniRule"/>
</dbReference>
<dbReference type="CDD" id="cd06223">
    <property type="entry name" value="PRTases_typeI"/>
    <property type="match status" value="1"/>
</dbReference>
<dbReference type="Gene3D" id="3.40.50.2020">
    <property type="match status" value="1"/>
</dbReference>
<dbReference type="HAMAP" id="MF_01184">
    <property type="entry name" value="XPRTase"/>
    <property type="match status" value="1"/>
</dbReference>
<dbReference type="InterPro" id="IPR000836">
    <property type="entry name" value="PRibTrfase_dom"/>
</dbReference>
<dbReference type="InterPro" id="IPR029057">
    <property type="entry name" value="PRTase-like"/>
</dbReference>
<dbReference type="InterPro" id="IPR050118">
    <property type="entry name" value="Pur/Pyrimidine_PRTase"/>
</dbReference>
<dbReference type="InterPro" id="IPR010079">
    <property type="entry name" value="Xanthine_PRibTrfase"/>
</dbReference>
<dbReference type="NCBIfam" id="NF006671">
    <property type="entry name" value="PRK09219.1"/>
    <property type="match status" value="1"/>
</dbReference>
<dbReference type="NCBIfam" id="TIGR01744">
    <property type="entry name" value="XPRTase"/>
    <property type="match status" value="1"/>
</dbReference>
<dbReference type="PANTHER" id="PTHR43864">
    <property type="entry name" value="HYPOXANTHINE/GUANINE PHOSPHORIBOSYLTRANSFERASE"/>
    <property type="match status" value="1"/>
</dbReference>
<dbReference type="PANTHER" id="PTHR43864:SF1">
    <property type="entry name" value="XANTHINE PHOSPHORIBOSYLTRANSFERASE"/>
    <property type="match status" value="1"/>
</dbReference>
<dbReference type="Pfam" id="PF00156">
    <property type="entry name" value="Pribosyltran"/>
    <property type="match status" value="1"/>
</dbReference>
<dbReference type="SUPFAM" id="SSF53271">
    <property type="entry name" value="PRTase-like"/>
    <property type="match status" value="1"/>
</dbReference>
<comment type="function">
    <text evidence="1">Converts the preformed base xanthine, a product of nucleic acid breakdown, to xanthosine 5'-monophosphate (XMP), so it can be reused for RNA or DNA synthesis.</text>
</comment>
<comment type="catalytic activity">
    <reaction evidence="1">
        <text>XMP + diphosphate = xanthine + 5-phospho-alpha-D-ribose 1-diphosphate</text>
        <dbReference type="Rhea" id="RHEA:10800"/>
        <dbReference type="ChEBI" id="CHEBI:17712"/>
        <dbReference type="ChEBI" id="CHEBI:33019"/>
        <dbReference type="ChEBI" id="CHEBI:57464"/>
        <dbReference type="ChEBI" id="CHEBI:58017"/>
        <dbReference type="EC" id="2.4.2.22"/>
    </reaction>
</comment>
<comment type="pathway">
    <text evidence="1">Purine metabolism; XMP biosynthesis via salvage pathway; XMP from xanthine: step 1/1.</text>
</comment>
<comment type="subunit">
    <text evidence="1">Homodimer.</text>
</comment>
<comment type="subcellular location">
    <subcellularLocation>
        <location evidence="1">Cytoplasm</location>
    </subcellularLocation>
</comment>
<comment type="similarity">
    <text evidence="1">Belongs to the purine/pyrimidine phosphoribosyltransferase family. Xpt subfamily.</text>
</comment>
<feature type="chain" id="PRO_0000339695" description="Xanthine phosphoribosyltransferase">
    <location>
        <begin position="1"/>
        <end position="202"/>
    </location>
</feature>
<feature type="binding site" evidence="1">
    <location>
        <position position="20"/>
    </location>
    <ligand>
        <name>xanthine</name>
        <dbReference type="ChEBI" id="CHEBI:17712"/>
    </ligand>
</feature>
<feature type="binding site" evidence="1">
    <location>
        <position position="27"/>
    </location>
    <ligand>
        <name>xanthine</name>
        <dbReference type="ChEBI" id="CHEBI:17712"/>
    </ligand>
</feature>
<feature type="binding site" evidence="1">
    <location>
        <begin position="128"/>
        <end position="132"/>
    </location>
    <ligand>
        <name>5-phospho-alpha-D-ribose 1-diphosphate</name>
        <dbReference type="ChEBI" id="CHEBI:58017"/>
    </ligand>
</feature>
<feature type="binding site" evidence="1">
    <location>
        <position position="156"/>
    </location>
    <ligand>
        <name>xanthine</name>
        <dbReference type="ChEBI" id="CHEBI:17712"/>
    </ligand>
</feature>
<accession>Q1J141</accession>
<proteinExistence type="inferred from homology"/>
<name>XPT_DEIGD</name>